<accession>Q9UWW6</accession>
<evidence type="ECO:0000255" key="1">
    <source>
        <dbReference type="HAMAP-Rule" id="MF_00309"/>
    </source>
</evidence>
<gene>
    <name evidence="1" type="primary">atpA</name>
    <name type="ordered locus">SSO0563</name>
</gene>
<sequence>MDNGRIVRINGPLVVADNMRNAQMYEVVEVGEPRLIGEITRIEGDRAFIQVYEDTSGIKPNEPVYRTGAPLSIELGPGLIGKIFDGLQRPLDSIKELTKSPFIARGIKVPSIDRKTKWHFVPKVKKGDKVEGGSIIGIVNETPLVEHRILVPPYVHGTLKEVVAEGDYTVEDPIAIVDMNGDEVPVKLMQKWPVRIPRPFKEKLEPTEPLLTGTRVLDTIFPIAKGGTAAIPGPFGSGKTVTLQSLAKWSAAKIVIYVGCGERGNEMTDELRQFPSLKDPWTGRPLLERTILVANTSNMPVAAREASIYVGITMAEYFRDQGYDTLLVADSTSRWAEALRDLGGRMEEMPAEEGFPSYLPSRLAEYYERAGRVKTIGNPERFGSVTVASAVSPPGGDFTEPVTSQTLRFVKVFWPLDVSLAQARHYPAINWLQGFSAYVDLVANWWNTNVDPKWREMRDMMVRTLIREDELRQIVRLVGPESLAEKDKLILETARLIKEAFLKQNAYDDIDAFSSPQKQARIMRLIYLFNTYASKLVERGIPTKKIVDSMGQLLPEIIRSKAAIKNDELNRYDELERKLITVFENLEKEAGT</sequence>
<comment type="function">
    <text evidence="1">Component of the A-type ATP synthase that produces ATP from ADP in the presence of a proton gradient across the membrane. The A chain is the catalytic subunit.</text>
</comment>
<comment type="catalytic activity">
    <reaction evidence="1">
        <text>ATP + H2O + 4 H(+)(in) = ADP + phosphate + 5 H(+)(out)</text>
        <dbReference type="Rhea" id="RHEA:57720"/>
        <dbReference type="ChEBI" id="CHEBI:15377"/>
        <dbReference type="ChEBI" id="CHEBI:15378"/>
        <dbReference type="ChEBI" id="CHEBI:30616"/>
        <dbReference type="ChEBI" id="CHEBI:43474"/>
        <dbReference type="ChEBI" id="CHEBI:456216"/>
        <dbReference type="EC" id="7.1.2.2"/>
    </reaction>
</comment>
<comment type="subunit">
    <text evidence="1">Has multiple subunits with at least A(3), B(3), C, D, E, F, H, I and proteolipid K(x).</text>
</comment>
<comment type="subcellular location">
    <subcellularLocation>
        <location evidence="1">Cell membrane</location>
        <topology evidence="1">Peripheral membrane protein</topology>
    </subcellularLocation>
</comment>
<comment type="similarity">
    <text evidence="1">Belongs to the ATPase alpha/beta chains family.</text>
</comment>
<keyword id="KW-0066">ATP synthesis</keyword>
<keyword id="KW-0067">ATP-binding</keyword>
<keyword id="KW-1003">Cell membrane</keyword>
<keyword id="KW-0375">Hydrogen ion transport</keyword>
<keyword id="KW-0406">Ion transport</keyword>
<keyword id="KW-0472">Membrane</keyword>
<keyword id="KW-0547">Nucleotide-binding</keyword>
<keyword id="KW-1185">Reference proteome</keyword>
<keyword id="KW-1278">Translocase</keyword>
<keyword id="KW-0813">Transport</keyword>
<protein>
    <recommendedName>
        <fullName evidence="1">A-type ATP synthase subunit A</fullName>
        <ecNumber evidence="1">7.1.2.2</ecNumber>
    </recommendedName>
</protein>
<name>AATA_SACS2</name>
<organism>
    <name type="scientific">Saccharolobus solfataricus (strain ATCC 35092 / DSM 1617 / JCM 11322 / P2)</name>
    <name type="common">Sulfolobus solfataricus</name>
    <dbReference type="NCBI Taxonomy" id="273057"/>
    <lineage>
        <taxon>Archaea</taxon>
        <taxon>Thermoproteota</taxon>
        <taxon>Thermoprotei</taxon>
        <taxon>Sulfolobales</taxon>
        <taxon>Sulfolobaceae</taxon>
        <taxon>Saccharolobus</taxon>
    </lineage>
</organism>
<dbReference type="EC" id="7.1.2.2" evidence="1"/>
<dbReference type="EMBL" id="Y18930">
    <property type="protein sequence ID" value="CAB57737.1"/>
    <property type="molecule type" value="Genomic_DNA"/>
</dbReference>
<dbReference type="EMBL" id="AE006641">
    <property type="protein sequence ID" value="AAK40879.1"/>
    <property type="molecule type" value="Genomic_DNA"/>
</dbReference>
<dbReference type="PIR" id="H90202">
    <property type="entry name" value="H90202"/>
</dbReference>
<dbReference type="RefSeq" id="WP_009991074.1">
    <property type="nucleotide sequence ID" value="NC_002754.1"/>
</dbReference>
<dbReference type="SMR" id="Q9UWW6"/>
<dbReference type="FunCoup" id="Q9UWW6">
    <property type="interactions" value="233"/>
</dbReference>
<dbReference type="STRING" id="273057.SSO0563"/>
<dbReference type="PaxDb" id="273057-SSO0563"/>
<dbReference type="EnsemblBacteria" id="AAK40879">
    <property type="protein sequence ID" value="AAK40879"/>
    <property type="gene ID" value="SSO0563"/>
</dbReference>
<dbReference type="KEGG" id="sso:SSO0563"/>
<dbReference type="PATRIC" id="fig|273057.12.peg.572"/>
<dbReference type="eggNOG" id="arCOG00868">
    <property type="taxonomic scope" value="Archaea"/>
</dbReference>
<dbReference type="HOGENOM" id="CLU_008162_3_1_2"/>
<dbReference type="InParanoid" id="Q9UWW6"/>
<dbReference type="PhylomeDB" id="Q9UWW6"/>
<dbReference type="Proteomes" id="UP000001974">
    <property type="component" value="Chromosome"/>
</dbReference>
<dbReference type="GO" id="GO:0005886">
    <property type="term" value="C:plasma membrane"/>
    <property type="evidence" value="ECO:0007669"/>
    <property type="project" value="UniProtKB-SubCell"/>
</dbReference>
<dbReference type="GO" id="GO:0033178">
    <property type="term" value="C:proton-transporting two-sector ATPase complex, catalytic domain"/>
    <property type="evidence" value="ECO:0007669"/>
    <property type="project" value="InterPro"/>
</dbReference>
<dbReference type="GO" id="GO:0005524">
    <property type="term" value="F:ATP binding"/>
    <property type="evidence" value="ECO:0007669"/>
    <property type="project" value="UniProtKB-UniRule"/>
</dbReference>
<dbReference type="GO" id="GO:0016887">
    <property type="term" value="F:ATP hydrolysis activity"/>
    <property type="evidence" value="ECO:0007669"/>
    <property type="project" value="InterPro"/>
</dbReference>
<dbReference type="GO" id="GO:0046933">
    <property type="term" value="F:proton-transporting ATP synthase activity, rotational mechanism"/>
    <property type="evidence" value="ECO:0007669"/>
    <property type="project" value="UniProtKB-UniRule"/>
</dbReference>
<dbReference type="GO" id="GO:0046961">
    <property type="term" value="F:proton-transporting ATPase activity, rotational mechanism"/>
    <property type="evidence" value="ECO:0000318"/>
    <property type="project" value="GO_Central"/>
</dbReference>
<dbReference type="GO" id="GO:0042777">
    <property type="term" value="P:proton motive force-driven plasma membrane ATP synthesis"/>
    <property type="evidence" value="ECO:0007669"/>
    <property type="project" value="UniProtKB-UniRule"/>
</dbReference>
<dbReference type="GO" id="GO:1902600">
    <property type="term" value="P:proton transmembrane transport"/>
    <property type="evidence" value="ECO:0000318"/>
    <property type="project" value="GO_Central"/>
</dbReference>
<dbReference type="CDD" id="cd18111">
    <property type="entry name" value="ATP-synt_V_A-type_alpha_C"/>
    <property type="match status" value="1"/>
</dbReference>
<dbReference type="CDD" id="cd18119">
    <property type="entry name" value="ATP-synt_V_A-type_alpha_N"/>
    <property type="match status" value="1"/>
</dbReference>
<dbReference type="CDD" id="cd01134">
    <property type="entry name" value="V_A-ATPase_A"/>
    <property type="match status" value="1"/>
</dbReference>
<dbReference type="FunFam" id="1.10.1140.10:FF:000002">
    <property type="entry name" value="V-type proton ATPase catalytic subunit A"/>
    <property type="match status" value="1"/>
</dbReference>
<dbReference type="FunFam" id="2.40.30.20:FF:000002">
    <property type="entry name" value="V-type proton ATPase catalytic subunit A"/>
    <property type="match status" value="1"/>
</dbReference>
<dbReference type="FunFam" id="2.40.50.100:FF:000008">
    <property type="entry name" value="V-type proton ATPase catalytic subunit A"/>
    <property type="match status" value="1"/>
</dbReference>
<dbReference type="Gene3D" id="2.40.30.20">
    <property type="match status" value="1"/>
</dbReference>
<dbReference type="Gene3D" id="2.40.50.100">
    <property type="match status" value="1"/>
</dbReference>
<dbReference type="Gene3D" id="1.10.1140.10">
    <property type="entry name" value="Bovine Mitochondrial F1-atpase, Atp Synthase Beta Chain, Chain D, domain 3"/>
    <property type="match status" value="1"/>
</dbReference>
<dbReference type="Gene3D" id="3.40.50.300">
    <property type="entry name" value="P-loop containing nucleotide triphosphate hydrolases"/>
    <property type="match status" value="1"/>
</dbReference>
<dbReference type="HAMAP" id="MF_00309">
    <property type="entry name" value="ATP_synth_A_arch"/>
    <property type="match status" value="1"/>
</dbReference>
<dbReference type="InterPro" id="IPR003593">
    <property type="entry name" value="AAA+_ATPase"/>
</dbReference>
<dbReference type="InterPro" id="IPR055190">
    <property type="entry name" value="ATP-synt_VA_C"/>
</dbReference>
<dbReference type="InterPro" id="IPR031686">
    <property type="entry name" value="ATP-synth_a_Xtn"/>
</dbReference>
<dbReference type="InterPro" id="IPR023366">
    <property type="entry name" value="ATP_synth_asu-like_sf"/>
</dbReference>
<dbReference type="InterPro" id="IPR005726">
    <property type="entry name" value="ATP_synth_asu_arc"/>
</dbReference>
<dbReference type="InterPro" id="IPR004100">
    <property type="entry name" value="ATPase_F1/V1/A1_a/bsu_N"/>
</dbReference>
<dbReference type="InterPro" id="IPR036121">
    <property type="entry name" value="ATPase_F1/V1/A1_a/bsu_N_sf"/>
</dbReference>
<dbReference type="InterPro" id="IPR000194">
    <property type="entry name" value="ATPase_F1/V1/A1_a/bsu_nucl-bd"/>
</dbReference>
<dbReference type="InterPro" id="IPR024034">
    <property type="entry name" value="ATPase_F1/V1_b/a_C"/>
</dbReference>
<dbReference type="InterPro" id="IPR027417">
    <property type="entry name" value="P-loop_NTPase"/>
</dbReference>
<dbReference type="InterPro" id="IPR022878">
    <property type="entry name" value="V-ATPase_asu"/>
</dbReference>
<dbReference type="NCBIfam" id="TIGR01043">
    <property type="entry name" value="ATP_syn_A_arch"/>
    <property type="match status" value="1"/>
</dbReference>
<dbReference type="NCBIfam" id="NF003220">
    <property type="entry name" value="PRK04192.1"/>
    <property type="match status" value="1"/>
</dbReference>
<dbReference type="PANTHER" id="PTHR43607:SF1">
    <property type="entry name" value="H(+)-TRANSPORTING TWO-SECTOR ATPASE"/>
    <property type="match status" value="1"/>
</dbReference>
<dbReference type="PANTHER" id="PTHR43607">
    <property type="entry name" value="V-TYPE PROTON ATPASE CATALYTIC SUBUNIT A"/>
    <property type="match status" value="1"/>
</dbReference>
<dbReference type="Pfam" id="PF00006">
    <property type="entry name" value="ATP-synt_ab"/>
    <property type="match status" value="1"/>
</dbReference>
<dbReference type="Pfam" id="PF02874">
    <property type="entry name" value="ATP-synt_ab_N"/>
    <property type="match status" value="1"/>
</dbReference>
<dbReference type="Pfam" id="PF16886">
    <property type="entry name" value="ATP-synt_ab_Xtn"/>
    <property type="match status" value="1"/>
</dbReference>
<dbReference type="Pfam" id="PF22919">
    <property type="entry name" value="ATP-synt_VA_C"/>
    <property type="match status" value="1"/>
</dbReference>
<dbReference type="SMART" id="SM00382">
    <property type="entry name" value="AAA"/>
    <property type="match status" value="1"/>
</dbReference>
<dbReference type="SUPFAM" id="SSF47917">
    <property type="entry name" value="C-terminal domain of alpha and beta subunits of F1 ATP synthase"/>
    <property type="match status" value="1"/>
</dbReference>
<dbReference type="SUPFAM" id="SSF50615">
    <property type="entry name" value="N-terminal domain of alpha and beta subunits of F1 ATP synthase"/>
    <property type="match status" value="1"/>
</dbReference>
<dbReference type="SUPFAM" id="SSF52540">
    <property type="entry name" value="P-loop containing nucleoside triphosphate hydrolases"/>
    <property type="match status" value="1"/>
</dbReference>
<proteinExistence type="inferred from homology"/>
<reference key="1">
    <citation type="journal article" date="2000" name="Genome">
        <title>Gene content and organization of a 281-kbp contig from the genome of the extremely thermophilic archaeon, Sulfolobus solfataricus P2.</title>
        <authorList>
            <person name="Charlebois R.L."/>
            <person name="Singh R.K."/>
            <person name="Chan-Weiher C.C.-Y."/>
            <person name="Allard G."/>
            <person name="Chow C."/>
            <person name="Confalonieri F."/>
            <person name="Curtis B."/>
            <person name="Duguet M."/>
            <person name="Erauso G."/>
            <person name="Faguy D."/>
            <person name="Gaasterland T."/>
            <person name="Garrett R.A."/>
            <person name="Gordon P."/>
            <person name="Jeffries A.C."/>
            <person name="Kozera C."/>
            <person name="Kushwaha N."/>
            <person name="Lafleur E."/>
            <person name="Medina N."/>
            <person name="Peng X."/>
            <person name="Penny S.L."/>
            <person name="She Q."/>
            <person name="St Jean A."/>
            <person name="van der Oost J."/>
            <person name="Young F."/>
            <person name="Zivanovic Y."/>
            <person name="Doolittle W.F."/>
            <person name="Ragan M.A."/>
            <person name="Sensen C.W."/>
        </authorList>
    </citation>
    <scope>NUCLEOTIDE SEQUENCE [LARGE SCALE GENOMIC DNA]</scope>
    <source>
        <strain>ATCC 35092 / DSM 1617 / JCM 11322 / P2</strain>
    </source>
</reference>
<reference key="2">
    <citation type="journal article" date="2001" name="Proc. Natl. Acad. Sci. U.S.A.">
        <title>The complete genome of the crenarchaeon Sulfolobus solfataricus P2.</title>
        <authorList>
            <person name="She Q."/>
            <person name="Singh R.K."/>
            <person name="Confalonieri F."/>
            <person name="Zivanovic Y."/>
            <person name="Allard G."/>
            <person name="Awayez M.J."/>
            <person name="Chan-Weiher C.C.-Y."/>
            <person name="Clausen I.G."/>
            <person name="Curtis B.A."/>
            <person name="De Moors A."/>
            <person name="Erauso G."/>
            <person name="Fletcher C."/>
            <person name="Gordon P.M.K."/>
            <person name="Heikamp-de Jong I."/>
            <person name="Jeffries A.C."/>
            <person name="Kozera C.J."/>
            <person name="Medina N."/>
            <person name="Peng X."/>
            <person name="Thi-Ngoc H.P."/>
            <person name="Redder P."/>
            <person name="Schenk M.E."/>
            <person name="Theriault C."/>
            <person name="Tolstrup N."/>
            <person name="Charlebois R.L."/>
            <person name="Doolittle W.F."/>
            <person name="Duguet M."/>
            <person name="Gaasterland T."/>
            <person name="Garrett R.A."/>
            <person name="Ragan M.A."/>
            <person name="Sensen C.W."/>
            <person name="Van der Oost J."/>
        </authorList>
    </citation>
    <scope>NUCLEOTIDE SEQUENCE [LARGE SCALE GENOMIC DNA]</scope>
    <source>
        <strain>ATCC 35092 / DSM 1617 / JCM 11322 / P2</strain>
    </source>
</reference>
<feature type="chain" id="PRO_0000144606" description="A-type ATP synthase subunit A">
    <location>
        <begin position="1"/>
        <end position="592"/>
    </location>
</feature>
<feature type="binding site" evidence="1">
    <location>
        <begin position="233"/>
        <end position="240"/>
    </location>
    <ligand>
        <name>ATP</name>
        <dbReference type="ChEBI" id="CHEBI:30616"/>
    </ligand>
</feature>